<protein>
    <recommendedName>
        <fullName evidence="1">UPF0761 membrane protein ABO_1543</fullName>
    </recommendedName>
</protein>
<comment type="subcellular location">
    <subcellularLocation>
        <location evidence="1">Cell inner membrane</location>
        <topology evidence="1">Multi-pass membrane protein</topology>
    </subcellularLocation>
</comment>
<comment type="similarity">
    <text evidence="1">Belongs to the UPF0761 family.</text>
</comment>
<comment type="sequence caution" evidence="2">
    <conflict type="erroneous initiation">
        <sequence resource="EMBL-CDS" id="CAL16991"/>
    </conflict>
</comment>
<keyword id="KW-0997">Cell inner membrane</keyword>
<keyword id="KW-1003">Cell membrane</keyword>
<keyword id="KW-0472">Membrane</keyword>
<keyword id="KW-1185">Reference proteome</keyword>
<keyword id="KW-0812">Transmembrane</keyword>
<keyword id="KW-1133">Transmembrane helix</keyword>
<organism>
    <name type="scientific">Alcanivorax borkumensis (strain ATCC 700651 / DSM 11573 / NCIMB 13689 / SK2)</name>
    <dbReference type="NCBI Taxonomy" id="393595"/>
    <lineage>
        <taxon>Bacteria</taxon>
        <taxon>Pseudomonadati</taxon>
        <taxon>Pseudomonadota</taxon>
        <taxon>Gammaproteobacteria</taxon>
        <taxon>Oceanospirillales</taxon>
        <taxon>Alcanivoracaceae</taxon>
        <taxon>Alcanivorax</taxon>
    </lineage>
</organism>
<accession>Q0VPA7</accession>
<sequence length="429" mass="48143">MENEQPVIPVQARFNSIKAFFVLLVRQFNEDGCRQSAAALTYTTLFAIVPVMTVSFVVLSSVPALQGKSAQLQEWAFEYFVPSAGNMLLDHLQSFAKQATNLTVLGIVFLVVTSVLMLSTVEQTLNRIWKVQTPRKGLVSLLMYWALLSLGPICLGLGLAITSYLTSQAIFSDTVSYLGGVRLWLAVLPFLFTTAMLTLMYTVVPNTTVPFRQGVLGAAMAALLFELAKGAFTFFIKQAPSYQVVYGAFAAVPVFLLWIYISWTIVLGGAELVRALVVFQEHQRQVPRMHALVRLLNVFWQRQQSGKVLRSKEIRQVMQESGISQWDEFRNLLVNANLIRRTDEGGYILSRDLRNISLGQLVAMLPWPAHTQLRVRQQPESLPWEQALKSRMDEAREGMMAPLDISLDALFSAPSAEKERHPEQQGRND</sequence>
<name>Y1543_ALCBS</name>
<dbReference type="EMBL" id="AM286690">
    <property type="protein sequence ID" value="CAL16991.1"/>
    <property type="status" value="ALT_INIT"/>
    <property type="molecule type" value="Genomic_DNA"/>
</dbReference>
<dbReference type="RefSeq" id="WP_041704962.1">
    <property type="nucleotide sequence ID" value="NC_008260.1"/>
</dbReference>
<dbReference type="SMR" id="Q0VPA7"/>
<dbReference type="STRING" id="393595.ABO_1543"/>
<dbReference type="KEGG" id="abo:ABO_1543"/>
<dbReference type="eggNOG" id="COG1295">
    <property type="taxonomic scope" value="Bacteria"/>
</dbReference>
<dbReference type="eggNOG" id="COG1959">
    <property type="taxonomic scope" value="Bacteria"/>
</dbReference>
<dbReference type="HOGENOM" id="CLU_032288_1_0_6"/>
<dbReference type="Proteomes" id="UP000008871">
    <property type="component" value="Chromosome"/>
</dbReference>
<dbReference type="GO" id="GO:0005886">
    <property type="term" value="C:plasma membrane"/>
    <property type="evidence" value="ECO:0007669"/>
    <property type="project" value="UniProtKB-SubCell"/>
</dbReference>
<dbReference type="HAMAP" id="MF_00672">
    <property type="entry name" value="UPF0761"/>
    <property type="match status" value="1"/>
</dbReference>
<dbReference type="InterPro" id="IPR023679">
    <property type="entry name" value="UPF0761_bac"/>
</dbReference>
<dbReference type="InterPro" id="IPR017039">
    <property type="entry name" value="Virul_fac_BrkB"/>
</dbReference>
<dbReference type="NCBIfam" id="TIGR00765">
    <property type="entry name" value="yihY_not_rbn"/>
    <property type="match status" value="1"/>
</dbReference>
<dbReference type="PANTHER" id="PTHR30213">
    <property type="entry name" value="INNER MEMBRANE PROTEIN YHJD"/>
    <property type="match status" value="1"/>
</dbReference>
<dbReference type="PANTHER" id="PTHR30213:SF0">
    <property type="entry name" value="UPF0761 MEMBRANE PROTEIN YIHY"/>
    <property type="match status" value="1"/>
</dbReference>
<dbReference type="Pfam" id="PF03631">
    <property type="entry name" value="Virul_fac_BrkB"/>
    <property type="match status" value="1"/>
</dbReference>
<evidence type="ECO:0000255" key="1">
    <source>
        <dbReference type="HAMAP-Rule" id="MF_00672"/>
    </source>
</evidence>
<evidence type="ECO:0000305" key="2"/>
<gene>
    <name type="ordered locus">ABO_1543</name>
</gene>
<feature type="chain" id="PRO_0000391017" description="UPF0761 membrane protein ABO_1543">
    <location>
        <begin position="1"/>
        <end position="429"/>
    </location>
</feature>
<feature type="transmembrane region" description="Helical" evidence="1">
    <location>
        <begin position="45"/>
        <end position="65"/>
    </location>
</feature>
<feature type="transmembrane region" description="Helical" evidence="1">
    <location>
        <begin position="102"/>
        <end position="122"/>
    </location>
</feature>
<feature type="transmembrane region" description="Helical" evidence="1">
    <location>
        <begin position="141"/>
        <end position="161"/>
    </location>
</feature>
<feature type="transmembrane region" description="Helical" evidence="1">
    <location>
        <begin position="184"/>
        <end position="204"/>
    </location>
</feature>
<feature type="transmembrane region" description="Helical" evidence="1">
    <location>
        <begin position="216"/>
        <end position="236"/>
    </location>
</feature>
<feature type="transmembrane region" description="Helical" evidence="1">
    <location>
        <begin position="256"/>
        <end position="278"/>
    </location>
</feature>
<reference key="1">
    <citation type="journal article" date="2006" name="Nat. Biotechnol.">
        <title>Genome sequence of the ubiquitous hydrocarbon-degrading marine bacterium Alcanivorax borkumensis.</title>
        <authorList>
            <person name="Schneiker S."/>
            <person name="Martins dos Santos V.A.P."/>
            <person name="Bartels D."/>
            <person name="Bekel T."/>
            <person name="Brecht M."/>
            <person name="Buhrmester J."/>
            <person name="Chernikova T.N."/>
            <person name="Denaro R."/>
            <person name="Ferrer M."/>
            <person name="Gertler C."/>
            <person name="Goesmann A."/>
            <person name="Golyshina O.V."/>
            <person name="Kaminski F."/>
            <person name="Khachane A.N."/>
            <person name="Lang S."/>
            <person name="Linke B."/>
            <person name="McHardy A.C."/>
            <person name="Meyer F."/>
            <person name="Nechitaylo T."/>
            <person name="Puehler A."/>
            <person name="Regenhardt D."/>
            <person name="Rupp O."/>
            <person name="Sabirova J.S."/>
            <person name="Selbitschka W."/>
            <person name="Yakimov M.M."/>
            <person name="Timmis K.N."/>
            <person name="Vorhoelter F.-J."/>
            <person name="Weidner S."/>
            <person name="Kaiser O."/>
            <person name="Golyshin P.N."/>
        </authorList>
    </citation>
    <scope>NUCLEOTIDE SEQUENCE [LARGE SCALE GENOMIC DNA]</scope>
    <source>
        <strain>ATCC 700651 / DSM 11573 / NCIMB 13689 / SK2</strain>
    </source>
</reference>
<proteinExistence type="inferred from homology"/>